<proteinExistence type="inferred from homology"/>
<accession>Q9ZZ60</accession>
<geneLocation type="mitochondrion"/>
<name>NU3M_CANLF</name>
<comment type="function">
    <text evidence="1">Core subunit of the mitochondrial membrane respiratory chain NADH dehydrogenase (Complex I) which catalyzes electron transfer from NADH through the respiratory chain, using ubiquinone as an electron acceptor. Essential for the catalytic activity of complex I.</text>
</comment>
<comment type="catalytic activity">
    <reaction evidence="1">
        <text>a ubiquinone + NADH + 5 H(+)(in) = a ubiquinol + NAD(+) + 4 H(+)(out)</text>
        <dbReference type="Rhea" id="RHEA:29091"/>
        <dbReference type="Rhea" id="RHEA-COMP:9565"/>
        <dbReference type="Rhea" id="RHEA-COMP:9566"/>
        <dbReference type="ChEBI" id="CHEBI:15378"/>
        <dbReference type="ChEBI" id="CHEBI:16389"/>
        <dbReference type="ChEBI" id="CHEBI:17976"/>
        <dbReference type="ChEBI" id="CHEBI:57540"/>
        <dbReference type="ChEBI" id="CHEBI:57945"/>
        <dbReference type="EC" id="7.1.1.2"/>
    </reaction>
</comment>
<comment type="subunit">
    <text evidence="1">Core subunit of respiratory chain NADH dehydrogenase (Complex I) which is composed of 45 different subunits (By similarity). Interacts with TMEM186 (By similarity). Interacts with TMEM242 (By similarity).</text>
</comment>
<comment type="subcellular location">
    <subcellularLocation>
        <location evidence="2">Mitochondrion inner membrane</location>
        <topology evidence="3">Multi-pass membrane protein</topology>
    </subcellularLocation>
</comment>
<comment type="similarity">
    <text evidence="4">Belongs to the complex I subunit 3 family.</text>
</comment>
<protein>
    <recommendedName>
        <fullName evidence="1">NADH-ubiquinone oxidoreductase chain 3</fullName>
        <ecNumber evidence="1">7.1.1.2</ecNumber>
    </recommendedName>
    <alternativeName>
        <fullName>NADH dehydrogenase subunit 3</fullName>
    </alternativeName>
</protein>
<evidence type="ECO:0000250" key="1">
    <source>
        <dbReference type="UniProtKB" id="P03897"/>
    </source>
</evidence>
<evidence type="ECO:0000250" key="2">
    <source>
        <dbReference type="UniProtKB" id="P03898"/>
    </source>
</evidence>
<evidence type="ECO:0000255" key="3"/>
<evidence type="ECO:0000305" key="4"/>
<evidence type="ECO:0000312" key="5">
    <source>
        <dbReference type="Proteomes" id="UP000002254"/>
    </source>
</evidence>
<dbReference type="EC" id="7.1.1.2" evidence="1"/>
<dbReference type="EMBL" id="U96639">
    <property type="protein sequence ID" value="AAD04770.2"/>
    <property type="molecule type" value="Genomic_DNA"/>
</dbReference>
<dbReference type="EMBL" id="AY729880">
    <property type="protein sequence ID" value="AAU12154.1"/>
    <property type="molecule type" value="Genomic_DNA"/>
</dbReference>
<dbReference type="PIR" id="T11500">
    <property type="entry name" value="T11500"/>
</dbReference>
<dbReference type="RefSeq" id="NP_008478.4">
    <property type="nucleotide sequence ID" value="NC_002008.4"/>
</dbReference>
<dbReference type="SMR" id="Q9ZZ60"/>
<dbReference type="FunCoup" id="Q9ZZ60">
    <property type="interactions" value="33"/>
</dbReference>
<dbReference type="STRING" id="9615.ENSCAFP00000030316"/>
<dbReference type="PaxDb" id="9612-ENSCAFP00000030316"/>
<dbReference type="GeneID" id="804481"/>
<dbReference type="KEGG" id="cfa:804481"/>
<dbReference type="CTD" id="4537"/>
<dbReference type="eggNOG" id="KOG4662">
    <property type="taxonomic scope" value="Eukaryota"/>
</dbReference>
<dbReference type="HOGENOM" id="CLU_119549_3_1_1"/>
<dbReference type="InParanoid" id="Q9ZZ60"/>
<dbReference type="OMA" id="GPRRYNR"/>
<dbReference type="TreeFam" id="TF343336"/>
<dbReference type="Proteomes" id="UP000002254">
    <property type="component" value="Mitochondrion"/>
</dbReference>
<dbReference type="Proteomes" id="UP000694429">
    <property type="component" value="Unplaced"/>
</dbReference>
<dbReference type="Proteomes" id="UP000694542">
    <property type="component" value="Unassembled WGS sequence"/>
</dbReference>
<dbReference type="Proteomes" id="UP000805418">
    <property type="component" value="Mitochondrion MT"/>
</dbReference>
<dbReference type="Bgee" id="ENSCAFG00000022732">
    <property type="expression patterns" value="Expressed in renal medulla and 46 other cell types or tissues"/>
</dbReference>
<dbReference type="GO" id="GO:0005743">
    <property type="term" value="C:mitochondrial inner membrane"/>
    <property type="evidence" value="ECO:0000250"/>
    <property type="project" value="UniProtKB"/>
</dbReference>
<dbReference type="GO" id="GO:0045271">
    <property type="term" value="C:respiratory chain complex I"/>
    <property type="evidence" value="ECO:0000318"/>
    <property type="project" value="GO_Central"/>
</dbReference>
<dbReference type="GO" id="GO:0008137">
    <property type="term" value="F:NADH dehydrogenase (ubiquinone) activity"/>
    <property type="evidence" value="ECO:0000250"/>
    <property type="project" value="UniProtKB"/>
</dbReference>
<dbReference type="GO" id="GO:0006120">
    <property type="term" value="P:mitochondrial electron transport, NADH to ubiquinone"/>
    <property type="evidence" value="ECO:0000250"/>
    <property type="project" value="UniProtKB"/>
</dbReference>
<dbReference type="FunFam" id="1.20.58.1610:FF:000004">
    <property type="entry name" value="NADH-quinone oxidoreductase subunit A"/>
    <property type="match status" value="1"/>
</dbReference>
<dbReference type="Gene3D" id="1.20.58.1610">
    <property type="entry name" value="NADH:ubiquinone/plastoquinone oxidoreductase, chain 3"/>
    <property type="match status" value="1"/>
</dbReference>
<dbReference type="InterPro" id="IPR000440">
    <property type="entry name" value="NADH_UbQ/plastoQ_OxRdtase_su3"/>
</dbReference>
<dbReference type="InterPro" id="IPR038430">
    <property type="entry name" value="NDAH_ubi_oxred_su3_sf"/>
</dbReference>
<dbReference type="PANTHER" id="PTHR11058">
    <property type="entry name" value="NADH-UBIQUINONE OXIDOREDUCTASE CHAIN 3"/>
    <property type="match status" value="1"/>
</dbReference>
<dbReference type="PANTHER" id="PTHR11058:SF9">
    <property type="entry name" value="NADH-UBIQUINONE OXIDOREDUCTASE CHAIN 3"/>
    <property type="match status" value="1"/>
</dbReference>
<dbReference type="Pfam" id="PF00507">
    <property type="entry name" value="Oxidored_q4"/>
    <property type="match status" value="1"/>
</dbReference>
<organism>
    <name type="scientific">Canis lupus familiaris</name>
    <name type="common">Dog</name>
    <name type="synonym">Canis familiaris</name>
    <dbReference type="NCBI Taxonomy" id="9615"/>
    <lineage>
        <taxon>Eukaryota</taxon>
        <taxon>Metazoa</taxon>
        <taxon>Chordata</taxon>
        <taxon>Craniata</taxon>
        <taxon>Vertebrata</taxon>
        <taxon>Euteleostomi</taxon>
        <taxon>Mammalia</taxon>
        <taxon>Eutheria</taxon>
        <taxon>Laurasiatheria</taxon>
        <taxon>Carnivora</taxon>
        <taxon>Caniformia</taxon>
        <taxon>Canidae</taxon>
        <taxon>Canis</taxon>
    </lineage>
</organism>
<reference key="1">
    <citation type="journal article" date="1998" name="Mol. Phylogenet. Evol.">
        <title>The complete nucleotide sequence of the domestic dog (Canis familiaris) mitochondrial genome.</title>
        <authorList>
            <person name="Kim K.S."/>
            <person name="Lee S.E."/>
            <person name="Jeong H.W."/>
            <person name="Ha J.H."/>
        </authorList>
    </citation>
    <scope>NUCLEOTIDE SEQUENCE [GENOMIC DNA]</scope>
    <source>
        <strain evidence="5">Boxer</strain>
    </source>
</reference>
<reference key="2">
    <citation type="submission" date="2000-04" db="EMBL/GenBank/DDBJ databases">
        <authorList>
            <person name="Kim K.S."/>
            <person name="Lee S.E."/>
            <person name="Jeong H.W."/>
            <person name="Jeong S.Y."/>
            <person name="Sohn H.S."/>
            <person name="Ha J.H."/>
        </authorList>
    </citation>
    <scope>SEQUENCE REVISION TO 108</scope>
</reference>
<reference key="3">
    <citation type="submission" date="2004-08" db="EMBL/GenBank/DDBJ databases">
        <title>The complete mitochondrial DNA sequence of the Beagle dog (Canis familiaris).</title>
        <authorList>
            <person name="Zhu S."/>
            <person name="Xu Q."/>
            <person name="Chang H."/>
        </authorList>
    </citation>
    <scope>NUCLEOTIDE SEQUENCE [GENOMIC DNA]</scope>
    <source>
        <strain>Beagle</strain>
    </source>
</reference>
<sequence length="115" mass="13010">MNVMLTLMTNVTLASLLVLIAFWLPQLNIYTDKTSPYECGFDPMGSARLPFSMKFFLVAITFLLFDLEIALLLPLPWASQTNKLTTMLIMALLLISLLAASLAYEWTEKGLEWTE</sequence>
<feature type="chain" id="PRO_0000117723" description="NADH-ubiquinone oxidoreductase chain 3">
    <location>
        <begin position="1"/>
        <end position="115"/>
    </location>
</feature>
<feature type="transmembrane region" description="Helical" evidence="3">
    <location>
        <begin position="3"/>
        <end position="23"/>
    </location>
</feature>
<feature type="transmembrane region" description="Helical" evidence="3">
    <location>
        <begin position="55"/>
        <end position="75"/>
    </location>
</feature>
<feature type="transmembrane region" description="Helical" evidence="3">
    <location>
        <begin position="84"/>
        <end position="104"/>
    </location>
</feature>
<gene>
    <name evidence="1" type="primary">MT-ND3</name>
    <name type="synonym">MTND3</name>
    <name type="synonym">NADH3</name>
    <name type="synonym">ND3</name>
</gene>
<keyword id="KW-0249">Electron transport</keyword>
<keyword id="KW-0472">Membrane</keyword>
<keyword id="KW-0496">Mitochondrion</keyword>
<keyword id="KW-0999">Mitochondrion inner membrane</keyword>
<keyword id="KW-0520">NAD</keyword>
<keyword id="KW-1185">Reference proteome</keyword>
<keyword id="KW-0679">Respiratory chain</keyword>
<keyword id="KW-1278">Translocase</keyword>
<keyword id="KW-0812">Transmembrane</keyword>
<keyword id="KW-1133">Transmembrane helix</keyword>
<keyword id="KW-0813">Transport</keyword>
<keyword id="KW-0830">Ubiquinone</keyword>